<accession>P68121</accession>
<accession>P14471</accession>
<reference key="1">
    <citation type="journal article" date="1965" name="Acta Chem. Scand.">
        <title>Studies on fibrinopeptides from mammals.</title>
        <authorList>
            <person name="Blombaeck B."/>
            <person name="Blombaeck M."/>
            <person name="Grondahl N.J."/>
        </authorList>
    </citation>
    <scope>PROTEIN SEQUENCE</scope>
    <scope>SULFATION AT TYR-3</scope>
</reference>
<evidence type="ECO:0000250" key="1">
    <source>
        <dbReference type="UniProtKB" id="E9PV24"/>
    </source>
</evidence>
<evidence type="ECO:0000250" key="2">
    <source>
        <dbReference type="UniProtKB" id="P02675"/>
    </source>
</evidence>
<evidence type="ECO:0000269" key="3">
    <source ref="1"/>
</evidence>
<proteinExistence type="evidence at protein level"/>
<gene>
    <name type="primary">FGB</name>
</gene>
<sequence length="19" mass="2296">LDYDHEEEDGRTKVTFDAR</sequence>
<comment type="function">
    <text evidence="1">Cleaved by the protease thrombin to yield monomers which, together with fibrinogen alpha (FGA) and fibrinogen gamma (FGG), polymerize to form an insoluble fibrin matrix. Fibrin has a major function in hemostasis as one of the primary components of blood clots. In addition, functions during the early stages of wound repair to stabilize the lesion and guide cell migration during re-epithelialization. Was originally thought to be essential for platelet aggregation, based on in vitro studies using anticoagulated blood. However subsequent studies have shown that it is not absolutely required for thrombus formation in vivo. Enhances expression of SELP in activated platelets. Maternal fibrinogen is essential for successful pregnancy. Fibrin deposition is also associated with infection, where it protects against IFNG-mediated hemorrhage. May also facilitate the antibacterial immune response via both innate and T-cell mediated pathways.</text>
</comment>
<comment type="subunit">
    <text evidence="2">Heterohexamer; disulfide linked. Contains 2 sets of 3 non-identical chains (alpha, beta and gamma). The 2 heterotrimers are in head to head conformation with the N-termini in a small central domain (By similarity).</text>
</comment>
<comment type="subcellular location">
    <subcellularLocation>
        <location>Secreted</location>
    </subcellularLocation>
</comment>
<comment type="domain">
    <text evidence="2">A long coiled coil structure formed by 3 polypeptide chains connects the central nodule to the C-terminal domains (distal nodules). The long C-terminal ends of the alpha chains fold back, contributing a fourth strand to the coiled coil structure.</text>
</comment>
<comment type="PTM">
    <text>Conversion of fibrinogen to fibrin is triggered by thrombin, which cleaves fibrinopeptides A and B from alpha and beta chains, and thus exposes the N-terminal polymerization sites responsible for the formation of the soft clot.</text>
</comment>
<protein>
    <recommendedName>
        <fullName>Fibrinogen beta chain</fullName>
    </recommendedName>
    <component>
        <recommendedName>
            <fullName>Fibrinopeptide B</fullName>
        </recommendedName>
    </component>
</protein>
<dbReference type="STRING" id="9796.ENSECAP00000008406"/>
<dbReference type="PaxDb" id="9796-ENSECAP00000008406"/>
<dbReference type="InParanoid" id="P68121"/>
<dbReference type="Proteomes" id="UP000002281">
    <property type="component" value="Unplaced"/>
</dbReference>
<dbReference type="GO" id="GO:0005576">
    <property type="term" value="C:extracellular region"/>
    <property type="evidence" value="ECO:0007669"/>
    <property type="project" value="UniProtKB-SubCell"/>
</dbReference>
<dbReference type="GO" id="GO:0002250">
    <property type="term" value="P:adaptive immune response"/>
    <property type="evidence" value="ECO:0007669"/>
    <property type="project" value="UniProtKB-KW"/>
</dbReference>
<dbReference type="GO" id="GO:0007596">
    <property type="term" value="P:blood coagulation"/>
    <property type="evidence" value="ECO:0007669"/>
    <property type="project" value="UniProtKB-KW"/>
</dbReference>
<dbReference type="GO" id="GO:0045087">
    <property type="term" value="P:innate immune response"/>
    <property type="evidence" value="ECO:0007669"/>
    <property type="project" value="UniProtKB-KW"/>
</dbReference>
<organism>
    <name type="scientific">Equus caballus</name>
    <name type="common">Horse</name>
    <dbReference type="NCBI Taxonomy" id="9796"/>
    <lineage>
        <taxon>Eukaryota</taxon>
        <taxon>Metazoa</taxon>
        <taxon>Chordata</taxon>
        <taxon>Craniata</taxon>
        <taxon>Vertebrata</taxon>
        <taxon>Euteleostomi</taxon>
        <taxon>Mammalia</taxon>
        <taxon>Eutheria</taxon>
        <taxon>Laurasiatheria</taxon>
        <taxon>Perissodactyla</taxon>
        <taxon>Equidae</taxon>
        <taxon>Equus</taxon>
    </lineage>
</organism>
<keyword id="KW-1064">Adaptive immunity</keyword>
<keyword id="KW-0094">Blood coagulation</keyword>
<keyword id="KW-0175">Coiled coil</keyword>
<keyword id="KW-0903">Direct protein sequencing</keyword>
<keyword id="KW-1015">Disulfide bond</keyword>
<keyword id="KW-0356">Hemostasis</keyword>
<keyword id="KW-0391">Immunity</keyword>
<keyword id="KW-0399">Innate immunity</keyword>
<keyword id="KW-1185">Reference proteome</keyword>
<keyword id="KW-0964">Secreted</keyword>
<keyword id="KW-0765">Sulfation</keyword>
<feature type="peptide" id="PRO_0000009069" description="Fibrinopeptide B">
    <location>
        <begin position="1"/>
        <end position="19"/>
    </location>
</feature>
<feature type="modified residue" description="Sulfotyrosine" evidence="3">
    <location>
        <position position="3"/>
    </location>
</feature>
<feature type="non-terminal residue">
    <location>
        <position position="19"/>
    </location>
</feature>
<name>FIBB_HORSE</name>